<proteinExistence type="inferred from homology"/>
<name>RPOZ_STRP3</name>
<gene>
    <name type="primary">rpoZ</name>
    <name type="ordered locus">SpyM3_1374</name>
</gene>
<sequence>MLKPSIDTLLDKVPSKYSLVILQAKRAHELEAGATPTQEFKSVKSTLQALEEIESGNVVIHPDPSAKREAVRAKIEAERLAKEEEERKIKEQIAKEKEEEGEKI</sequence>
<reference key="1">
    <citation type="journal article" date="2002" name="Proc. Natl. Acad. Sci. U.S.A.">
        <title>Genome sequence of a serotype M3 strain of group A Streptococcus: phage-encoded toxins, the high-virulence phenotype, and clone emergence.</title>
        <authorList>
            <person name="Beres S.B."/>
            <person name="Sylva G.L."/>
            <person name="Barbian K.D."/>
            <person name="Lei B."/>
            <person name="Hoff J.S."/>
            <person name="Mammarella N.D."/>
            <person name="Liu M.-Y."/>
            <person name="Smoot J.C."/>
            <person name="Porcella S.F."/>
            <person name="Parkins L.D."/>
            <person name="Campbell D.S."/>
            <person name="Smith T.M."/>
            <person name="McCormick J.K."/>
            <person name="Leung D.Y.M."/>
            <person name="Schlievert P.M."/>
            <person name="Musser J.M."/>
        </authorList>
    </citation>
    <scope>NUCLEOTIDE SEQUENCE [LARGE SCALE GENOMIC DNA]</scope>
    <source>
        <strain>ATCC BAA-595 / MGAS315</strain>
    </source>
</reference>
<evidence type="ECO:0000250" key="1"/>
<evidence type="ECO:0000305" key="2"/>
<comment type="function">
    <text evidence="1">Promotes RNA polymerase assembly. Latches the N- and C-terminal regions of the beta' subunit thereby facilitating its interaction with the beta and alpha subunits (By similarity).</text>
</comment>
<comment type="catalytic activity">
    <reaction>
        <text>RNA(n) + a ribonucleoside 5'-triphosphate = RNA(n+1) + diphosphate</text>
        <dbReference type="Rhea" id="RHEA:21248"/>
        <dbReference type="Rhea" id="RHEA-COMP:14527"/>
        <dbReference type="Rhea" id="RHEA-COMP:17342"/>
        <dbReference type="ChEBI" id="CHEBI:33019"/>
        <dbReference type="ChEBI" id="CHEBI:61557"/>
        <dbReference type="ChEBI" id="CHEBI:140395"/>
        <dbReference type="EC" id="2.7.7.6"/>
    </reaction>
</comment>
<comment type="subunit">
    <text evidence="1">The RNAP catalytic core consists of 2 alpha, 1 beta, 1 beta' and 1 omega subunit. When a sigma factor is associated with the core the holoenzyme is formed, which can initiate transcription (By similarity).</text>
</comment>
<comment type="similarity">
    <text evidence="2">Belongs to the RNA polymerase subunit omega family.</text>
</comment>
<comment type="sequence caution" evidence="2">
    <conflict type="erroneous initiation">
        <sequence resource="EMBL-CDS" id="AAM79981"/>
    </conflict>
</comment>
<protein>
    <recommendedName>
        <fullName>DNA-directed RNA polymerase subunit omega</fullName>
        <shortName>RNAP omega subunit</shortName>
        <ecNumber>2.7.7.6</ecNumber>
    </recommendedName>
    <alternativeName>
        <fullName>RNA polymerase omega subunit</fullName>
    </alternativeName>
    <alternativeName>
        <fullName>Transcriptase subunit omega</fullName>
    </alternativeName>
</protein>
<accession>P0DF36</accession>
<accession>P68841</accession>
<accession>P82577</accession>
<organism>
    <name type="scientific">Streptococcus pyogenes serotype M3 (strain ATCC BAA-595 / MGAS315)</name>
    <dbReference type="NCBI Taxonomy" id="198466"/>
    <lineage>
        <taxon>Bacteria</taxon>
        <taxon>Bacillati</taxon>
        <taxon>Bacillota</taxon>
        <taxon>Bacilli</taxon>
        <taxon>Lactobacillales</taxon>
        <taxon>Streptococcaceae</taxon>
        <taxon>Streptococcus</taxon>
    </lineage>
</organism>
<feature type="chain" id="PRO_0000128996" description="DNA-directed RNA polymerase subunit omega">
    <location>
        <begin position="1"/>
        <end position="104"/>
    </location>
</feature>
<keyword id="KW-0240">DNA-directed RNA polymerase</keyword>
<keyword id="KW-0548">Nucleotidyltransferase</keyword>
<keyword id="KW-0804">Transcription</keyword>
<keyword id="KW-0808">Transferase</keyword>
<dbReference type="EC" id="2.7.7.6"/>
<dbReference type="EMBL" id="AE014074">
    <property type="protein sequence ID" value="AAM79981.1"/>
    <property type="status" value="ALT_INIT"/>
    <property type="molecule type" value="Genomic_DNA"/>
</dbReference>
<dbReference type="SMR" id="P0DF36"/>
<dbReference type="KEGG" id="spg:SpyM3_1374"/>
<dbReference type="HOGENOM" id="CLU_125406_0_0_9"/>
<dbReference type="Proteomes" id="UP000000564">
    <property type="component" value="Chromosome"/>
</dbReference>
<dbReference type="GO" id="GO:0000428">
    <property type="term" value="C:DNA-directed RNA polymerase complex"/>
    <property type="evidence" value="ECO:0007669"/>
    <property type="project" value="UniProtKB-KW"/>
</dbReference>
<dbReference type="GO" id="GO:0003677">
    <property type="term" value="F:DNA binding"/>
    <property type="evidence" value="ECO:0007669"/>
    <property type="project" value="UniProtKB-UniRule"/>
</dbReference>
<dbReference type="GO" id="GO:0003899">
    <property type="term" value="F:DNA-directed RNA polymerase activity"/>
    <property type="evidence" value="ECO:0007669"/>
    <property type="project" value="UniProtKB-UniRule"/>
</dbReference>
<dbReference type="GO" id="GO:0006351">
    <property type="term" value="P:DNA-templated transcription"/>
    <property type="evidence" value="ECO:0007669"/>
    <property type="project" value="UniProtKB-UniRule"/>
</dbReference>
<dbReference type="Gene3D" id="3.90.940.10">
    <property type="match status" value="1"/>
</dbReference>
<dbReference type="HAMAP" id="MF_00366">
    <property type="entry name" value="RNApol_bact_RpoZ"/>
    <property type="match status" value="1"/>
</dbReference>
<dbReference type="InterPro" id="IPR003716">
    <property type="entry name" value="DNA-dir_RNA_pol_omega"/>
</dbReference>
<dbReference type="InterPro" id="IPR006110">
    <property type="entry name" value="Pol_omega/Rpo6/RPB6"/>
</dbReference>
<dbReference type="InterPro" id="IPR036161">
    <property type="entry name" value="RPB6/omega-like_sf"/>
</dbReference>
<dbReference type="NCBIfam" id="TIGR00690">
    <property type="entry name" value="rpoZ"/>
    <property type="match status" value="1"/>
</dbReference>
<dbReference type="PANTHER" id="PTHR34476">
    <property type="entry name" value="DNA-DIRECTED RNA POLYMERASE SUBUNIT OMEGA"/>
    <property type="match status" value="1"/>
</dbReference>
<dbReference type="PANTHER" id="PTHR34476:SF1">
    <property type="entry name" value="DNA-DIRECTED RNA POLYMERASE SUBUNIT OMEGA"/>
    <property type="match status" value="1"/>
</dbReference>
<dbReference type="Pfam" id="PF01192">
    <property type="entry name" value="RNA_pol_Rpb6"/>
    <property type="match status" value="1"/>
</dbReference>
<dbReference type="SMART" id="SM01409">
    <property type="entry name" value="RNA_pol_Rpb6"/>
    <property type="match status" value="1"/>
</dbReference>
<dbReference type="SUPFAM" id="SSF63562">
    <property type="entry name" value="RPB6/omega subunit-like"/>
    <property type="match status" value="1"/>
</dbReference>